<gene>
    <name evidence="1" type="primary">rplR</name>
    <name type="ordered locus">RHA1_ro06149</name>
</gene>
<name>RL18_RHOJR</name>
<reference key="1">
    <citation type="journal article" date="2006" name="Proc. Natl. Acad. Sci. U.S.A.">
        <title>The complete genome of Rhodococcus sp. RHA1 provides insights into a catabolic powerhouse.</title>
        <authorList>
            <person name="McLeod M.P."/>
            <person name="Warren R.L."/>
            <person name="Hsiao W.W.L."/>
            <person name="Araki N."/>
            <person name="Myhre M."/>
            <person name="Fernandes C."/>
            <person name="Miyazawa D."/>
            <person name="Wong W."/>
            <person name="Lillquist A.L."/>
            <person name="Wang D."/>
            <person name="Dosanjh M."/>
            <person name="Hara H."/>
            <person name="Petrescu A."/>
            <person name="Morin R.D."/>
            <person name="Yang G."/>
            <person name="Stott J.M."/>
            <person name="Schein J.E."/>
            <person name="Shin H."/>
            <person name="Smailus D."/>
            <person name="Siddiqui A.S."/>
            <person name="Marra M.A."/>
            <person name="Jones S.J.M."/>
            <person name="Holt R."/>
            <person name="Brinkman F.S.L."/>
            <person name="Miyauchi K."/>
            <person name="Fukuda M."/>
            <person name="Davies J.E."/>
            <person name="Mohn W.W."/>
            <person name="Eltis L.D."/>
        </authorList>
    </citation>
    <scope>NUCLEOTIDE SEQUENCE [LARGE SCALE GENOMIC DNA]</scope>
    <source>
        <strain>RHA1</strain>
    </source>
</reference>
<dbReference type="EMBL" id="CP000431">
    <property type="protein sequence ID" value="ABG97926.1"/>
    <property type="molecule type" value="Genomic_DNA"/>
</dbReference>
<dbReference type="RefSeq" id="WP_009479372.1">
    <property type="nucleotide sequence ID" value="NC_008268.1"/>
</dbReference>
<dbReference type="SMR" id="Q0S3G0"/>
<dbReference type="KEGG" id="rha:RHA1_ro06149"/>
<dbReference type="eggNOG" id="COG0256">
    <property type="taxonomic scope" value="Bacteria"/>
</dbReference>
<dbReference type="HOGENOM" id="CLU_098841_0_1_11"/>
<dbReference type="OrthoDB" id="9810939at2"/>
<dbReference type="Proteomes" id="UP000008710">
    <property type="component" value="Chromosome"/>
</dbReference>
<dbReference type="GO" id="GO:0022625">
    <property type="term" value="C:cytosolic large ribosomal subunit"/>
    <property type="evidence" value="ECO:0007669"/>
    <property type="project" value="TreeGrafter"/>
</dbReference>
<dbReference type="GO" id="GO:0008097">
    <property type="term" value="F:5S rRNA binding"/>
    <property type="evidence" value="ECO:0007669"/>
    <property type="project" value="TreeGrafter"/>
</dbReference>
<dbReference type="GO" id="GO:0003735">
    <property type="term" value="F:structural constituent of ribosome"/>
    <property type="evidence" value="ECO:0007669"/>
    <property type="project" value="InterPro"/>
</dbReference>
<dbReference type="GO" id="GO:0006412">
    <property type="term" value="P:translation"/>
    <property type="evidence" value="ECO:0007669"/>
    <property type="project" value="UniProtKB-UniRule"/>
</dbReference>
<dbReference type="CDD" id="cd00432">
    <property type="entry name" value="Ribosomal_L18_L5e"/>
    <property type="match status" value="1"/>
</dbReference>
<dbReference type="FunFam" id="3.30.420.100:FF:000001">
    <property type="entry name" value="50S ribosomal protein L18"/>
    <property type="match status" value="1"/>
</dbReference>
<dbReference type="Gene3D" id="3.30.420.100">
    <property type="match status" value="1"/>
</dbReference>
<dbReference type="HAMAP" id="MF_01337_B">
    <property type="entry name" value="Ribosomal_uL18_B"/>
    <property type="match status" value="1"/>
</dbReference>
<dbReference type="InterPro" id="IPR004389">
    <property type="entry name" value="Ribosomal_uL18_bac-type"/>
</dbReference>
<dbReference type="InterPro" id="IPR005484">
    <property type="entry name" value="Ribosomal_uL18_bac/euk"/>
</dbReference>
<dbReference type="NCBIfam" id="TIGR00060">
    <property type="entry name" value="L18_bact"/>
    <property type="match status" value="1"/>
</dbReference>
<dbReference type="PANTHER" id="PTHR12899">
    <property type="entry name" value="39S RIBOSOMAL PROTEIN L18, MITOCHONDRIAL"/>
    <property type="match status" value="1"/>
</dbReference>
<dbReference type="PANTHER" id="PTHR12899:SF3">
    <property type="entry name" value="LARGE RIBOSOMAL SUBUNIT PROTEIN UL18M"/>
    <property type="match status" value="1"/>
</dbReference>
<dbReference type="Pfam" id="PF00861">
    <property type="entry name" value="Ribosomal_L18p"/>
    <property type="match status" value="1"/>
</dbReference>
<dbReference type="SUPFAM" id="SSF53137">
    <property type="entry name" value="Translational machinery components"/>
    <property type="match status" value="1"/>
</dbReference>
<sequence length="135" mass="14517">MSQTANQKAKRIPLGKDASTKRRLSKVRRHFRLRKKVSGTPERPRLVVNRSARHIHVQLVDDLAGHTLAAASTTEADVRAADGDKKALSAKVGQLIAERAKAAGVEAVVFDHGGHGYHGRIAALADAAREGGLKF</sequence>
<protein>
    <recommendedName>
        <fullName evidence="1">Large ribosomal subunit protein uL18</fullName>
    </recommendedName>
    <alternativeName>
        <fullName evidence="3">50S ribosomal protein L18</fullName>
    </alternativeName>
</protein>
<comment type="function">
    <text evidence="1">This is one of the proteins that bind and probably mediate the attachment of the 5S RNA into the large ribosomal subunit, where it forms part of the central protuberance.</text>
</comment>
<comment type="subunit">
    <text evidence="1">Part of the 50S ribosomal subunit; part of the 5S rRNA/L5/L18/L25 subcomplex. Contacts the 5S and 23S rRNAs.</text>
</comment>
<comment type="similarity">
    <text evidence="1">Belongs to the universal ribosomal protein uL18 family.</text>
</comment>
<feature type="chain" id="PRO_0000251356" description="Large ribosomal subunit protein uL18">
    <location>
        <begin position="1"/>
        <end position="135"/>
    </location>
</feature>
<feature type="region of interest" description="Disordered" evidence="2">
    <location>
        <begin position="1"/>
        <end position="23"/>
    </location>
</feature>
<evidence type="ECO:0000255" key="1">
    <source>
        <dbReference type="HAMAP-Rule" id="MF_01337"/>
    </source>
</evidence>
<evidence type="ECO:0000256" key="2">
    <source>
        <dbReference type="SAM" id="MobiDB-lite"/>
    </source>
</evidence>
<evidence type="ECO:0000305" key="3"/>
<organism>
    <name type="scientific">Rhodococcus jostii (strain RHA1)</name>
    <dbReference type="NCBI Taxonomy" id="101510"/>
    <lineage>
        <taxon>Bacteria</taxon>
        <taxon>Bacillati</taxon>
        <taxon>Actinomycetota</taxon>
        <taxon>Actinomycetes</taxon>
        <taxon>Mycobacteriales</taxon>
        <taxon>Nocardiaceae</taxon>
        <taxon>Rhodococcus</taxon>
    </lineage>
</organism>
<keyword id="KW-0687">Ribonucleoprotein</keyword>
<keyword id="KW-0689">Ribosomal protein</keyword>
<keyword id="KW-0694">RNA-binding</keyword>
<keyword id="KW-0699">rRNA-binding</keyword>
<proteinExistence type="inferred from homology"/>
<accession>Q0S3G0</accession>